<keyword id="KW-0963">Cytoplasm</keyword>
<keyword id="KW-0227">DNA damage</keyword>
<keyword id="KW-0233">DNA recombination</keyword>
<keyword id="KW-0234">DNA repair</keyword>
<keyword id="KW-0238">DNA-binding</keyword>
<keyword id="KW-0255">Endonuclease</keyword>
<keyword id="KW-0378">Hydrolase</keyword>
<keyword id="KW-0460">Magnesium</keyword>
<keyword id="KW-0479">Metal-binding</keyword>
<keyword id="KW-0540">Nuclease</keyword>
<keyword id="KW-1185">Reference proteome</keyword>
<reference key="1">
    <citation type="journal article" date="2002" name="DNA Res.">
        <title>Complete genome structure of the thermophilic cyanobacterium Thermosynechococcus elongatus BP-1.</title>
        <authorList>
            <person name="Nakamura Y."/>
            <person name="Kaneko T."/>
            <person name="Sato S."/>
            <person name="Ikeuchi M."/>
            <person name="Katoh H."/>
            <person name="Sasamoto S."/>
            <person name="Watanabe A."/>
            <person name="Iriguchi M."/>
            <person name="Kawashima K."/>
            <person name="Kimura T."/>
            <person name="Kishida Y."/>
            <person name="Kiyokawa C."/>
            <person name="Kohara M."/>
            <person name="Matsumoto M."/>
            <person name="Matsuno A."/>
            <person name="Nakazaki N."/>
            <person name="Shimpo S."/>
            <person name="Sugimoto M."/>
            <person name="Takeuchi C."/>
            <person name="Yamada M."/>
            <person name="Tabata S."/>
        </authorList>
    </citation>
    <scope>NUCLEOTIDE SEQUENCE [LARGE SCALE GENOMIC DNA]</scope>
    <source>
        <strain>NIES-2133 / IAM M-273 / BP-1</strain>
    </source>
</reference>
<protein>
    <recommendedName>
        <fullName evidence="1">Crossover junction endodeoxyribonuclease RuvC</fullName>
        <ecNumber evidence="1">3.1.21.10</ecNumber>
    </recommendedName>
    <alternativeName>
        <fullName evidence="1">Holliday junction nuclease RuvC</fullName>
    </alternativeName>
    <alternativeName>
        <fullName evidence="1">Holliday junction resolvase RuvC</fullName>
    </alternativeName>
</protein>
<accession>Q8DJT5</accession>
<sequence length="159" mass="17425">MRILGLDPGLATLGYGCIEVYRDTCQVRDFGVITTSADLPTGDRLQSLYNDLHTLIPILQPDLVALERLFFYRMSHTIGVAQARGVILLVLSQRHCPLLELTPPQVKQALTGYGNATKIEVQRAVQRELHLCTLPQPDDAADALAIALTASRHCGHING</sequence>
<proteinExistence type="inferred from homology"/>
<name>RUVC_THEVB</name>
<organism>
    <name type="scientific">Thermosynechococcus vestitus (strain NIES-2133 / IAM M-273 / BP-1)</name>
    <dbReference type="NCBI Taxonomy" id="197221"/>
    <lineage>
        <taxon>Bacteria</taxon>
        <taxon>Bacillati</taxon>
        <taxon>Cyanobacteriota</taxon>
        <taxon>Cyanophyceae</taxon>
        <taxon>Acaryochloridales</taxon>
        <taxon>Thermosynechococcaceae</taxon>
        <taxon>Thermosynechococcus</taxon>
    </lineage>
</organism>
<gene>
    <name evidence="1" type="primary">ruvC</name>
    <name type="ordered locus">tlr1137</name>
</gene>
<dbReference type="EC" id="3.1.21.10" evidence="1"/>
<dbReference type="EMBL" id="BA000039">
    <property type="protein sequence ID" value="BAC08689.1"/>
    <property type="molecule type" value="Genomic_DNA"/>
</dbReference>
<dbReference type="RefSeq" id="NP_681927.1">
    <property type="nucleotide sequence ID" value="NC_004113.1"/>
</dbReference>
<dbReference type="RefSeq" id="WP_011056979.1">
    <property type="nucleotide sequence ID" value="NC_004113.1"/>
</dbReference>
<dbReference type="SMR" id="Q8DJT5"/>
<dbReference type="STRING" id="197221.gene:10747732"/>
<dbReference type="EnsemblBacteria" id="BAC08689">
    <property type="protein sequence ID" value="BAC08689"/>
    <property type="gene ID" value="BAC08689"/>
</dbReference>
<dbReference type="KEGG" id="tel:tlr1137"/>
<dbReference type="PATRIC" id="fig|197221.4.peg.1193"/>
<dbReference type="eggNOG" id="COG0817">
    <property type="taxonomic scope" value="Bacteria"/>
</dbReference>
<dbReference type="Proteomes" id="UP000000440">
    <property type="component" value="Chromosome"/>
</dbReference>
<dbReference type="GO" id="GO:0005737">
    <property type="term" value="C:cytoplasm"/>
    <property type="evidence" value="ECO:0007669"/>
    <property type="project" value="UniProtKB-SubCell"/>
</dbReference>
<dbReference type="GO" id="GO:0048476">
    <property type="term" value="C:Holliday junction resolvase complex"/>
    <property type="evidence" value="ECO:0007669"/>
    <property type="project" value="UniProtKB-UniRule"/>
</dbReference>
<dbReference type="GO" id="GO:0008821">
    <property type="term" value="F:crossover junction DNA endonuclease activity"/>
    <property type="evidence" value="ECO:0007669"/>
    <property type="project" value="UniProtKB-UniRule"/>
</dbReference>
<dbReference type="GO" id="GO:0003677">
    <property type="term" value="F:DNA binding"/>
    <property type="evidence" value="ECO:0007669"/>
    <property type="project" value="UniProtKB-KW"/>
</dbReference>
<dbReference type="GO" id="GO:0000287">
    <property type="term" value="F:magnesium ion binding"/>
    <property type="evidence" value="ECO:0007669"/>
    <property type="project" value="UniProtKB-UniRule"/>
</dbReference>
<dbReference type="GO" id="GO:0006310">
    <property type="term" value="P:DNA recombination"/>
    <property type="evidence" value="ECO:0007669"/>
    <property type="project" value="UniProtKB-UniRule"/>
</dbReference>
<dbReference type="GO" id="GO:0006281">
    <property type="term" value="P:DNA repair"/>
    <property type="evidence" value="ECO:0007669"/>
    <property type="project" value="UniProtKB-UniRule"/>
</dbReference>
<dbReference type="CDD" id="cd16962">
    <property type="entry name" value="RuvC"/>
    <property type="match status" value="1"/>
</dbReference>
<dbReference type="FunFam" id="3.30.420.10:FF:000002">
    <property type="entry name" value="Crossover junction endodeoxyribonuclease RuvC"/>
    <property type="match status" value="1"/>
</dbReference>
<dbReference type="Gene3D" id="3.30.420.10">
    <property type="entry name" value="Ribonuclease H-like superfamily/Ribonuclease H"/>
    <property type="match status" value="1"/>
</dbReference>
<dbReference type="HAMAP" id="MF_00034">
    <property type="entry name" value="RuvC"/>
    <property type="match status" value="1"/>
</dbReference>
<dbReference type="InterPro" id="IPR012337">
    <property type="entry name" value="RNaseH-like_sf"/>
</dbReference>
<dbReference type="InterPro" id="IPR036397">
    <property type="entry name" value="RNaseH_sf"/>
</dbReference>
<dbReference type="InterPro" id="IPR020563">
    <property type="entry name" value="X-over_junc_endoDNase_Mg_BS"/>
</dbReference>
<dbReference type="InterPro" id="IPR002176">
    <property type="entry name" value="X-over_junc_endoDNase_RuvC"/>
</dbReference>
<dbReference type="NCBIfam" id="NF000711">
    <property type="entry name" value="PRK00039.2-1"/>
    <property type="match status" value="1"/>
</dbReference>
<dbReference type="PANTHER" id="PTHR30194">
    <property type="entry name" value="CROSSOVER JUNCTION ENDODEOXYRIBONUCLEASE RUVC"/>
    <property type="match status" value="1"/>
</dbReference>
<dbReference type="PANTHER" id="PTHR30194:SF3">
    <property type="entry name" value="CROSSOVER JUNCTION ENDODEOXYRIBONUCLEASE RUVC"/>
    <property type="match status" value="1"/>
</dbReference>
<dbReference type="Pfam" id="PF02075">
    <property type="entry name" value="RuvC"/>
    <property type="match status" value="1"/>
</dbReference>
<dbReference type="PRINTS" id="PR00696">
    <property type="entry name" value="RSOLVASERUVC"/>
</dbReference>
<dbReference type="SUPFAM" id="SSF53098">
    <property type="entry name" value="Ribonuclease H-like"/>
    <property type="match status" value="1"/>
</dbReference>
<dbReference type="PROSITE" id="PS01321">
    <property type="entry name" value="RUVC"/>
    <property type="match status" value="1"/>
</dbReference>
<feature type="chain" id="PRO_0000183136" description="Crossover junction endodeoxyribonuclease RuvC">
    <location>
        <begin position="1"/>
        <end position="159"/>
    </location>
</feature>
<feature type="active site" evidence="1">
    <location>
        <position position="7"/>
    </location>
</feature>
<feature type="active site" evidence="1">
    <location>
        <position position="67"/>
    </location>
</feature>
<feature type="active site" evidence="1">
    <location>
        <position position="139"/>
    </location>
</feature>
<feature type="binding site" evidence="1">
    <location>
        <position position="7"/>
    </location>
    <ligand>
        <name>Mg(2+)</name>
        <dbReference type="ChEBI" id="CHEBI:18420"/>
        <label>1</label>
    </ligand>
</feature>
<feature type="binding site" evidence="1">
    <location>
        <position position="67"/>
    </location>
    <ligand>
        <name>Mg(2+)</name>
        <dbReference type="ChEBI" id="CHEBI:18420"/>
        <label>2</label>
    </ligand>
</feature>
<feature type="binding site" evidence="1">
    <location>
        <position position="139"/>
    </location>
    <ligand>
        <name>Mg(2+)</name>
        <dbReference type="ChEBI" id="CHEBI:18420"/>
        <label>1</label>
    </ligand>
</feature>
<evidence type="ECO:0000255" key="1">
    <source>
        <dbReference type="HAMAP-Rule" id="MF_00034"/>
    </source>
</evidence>
<comment type="function">
    <text evidence="1">The RuvA-RuvB-RuvC complex processes Holliday junction (HJ) DNA during genetic recombination and DNA repair. Endonuclease that resolves HJ intermediates. Cleaves cruciform DNA by making single-stranded nicks across the HJ at symmetrical positions within the homologous arms, yielding a 5'-phosphate and a 3'-hydroxyl group; requires a central core of homology in the junction. The consensus cleavage sequence is 5'-(A/T)TT(C/G)-3'. Cleavage occurs on the 3'-side of the TT dinucleotide at the point of strand exchange. HJ branch migration catalyzed by RuvA-RuvB allows RuvC to scan DNA until it finds its consensus sequence, where it cleaves and resolves the cruciform DNA.</text>
</comment>
<comment type="catalytic activity">
    <reaction evidence="1">
        <text>Endonucleolytic cleavage at a junction such as a reciprocal single-stranded crossover between two homologous DNA duplexes (Holliday junction).</text>
        <dbReference type="EC" id="3.1.21.10"/>
    </reaction>
</comment>
<comment type="cofactor">
    <cofactor evidence="1">
        <name>Mg(2+)</name>
        <dbReference type="ChEBI" id="CHEBI:18420"/>
    </cofactor>
    <text evidence="1">Binds 2 Mg(2+) ion per subunit.</text>
</comment>
<comment type="subunit">
    <text evidence="1">Homodimer which binds Holliday junction (HJ) DNA. The HJ becomes 2-fold symmetrical on binding to RuvC with unstacked arms; it has a different conformation from HJ DNA in complex with RuvA. In the full resolvosome a probable DNA-RuvA(4)-RuvB(12)-RuvC(2) complex forms which resolves the HJ.</text>
</comment>
<comment type="subcellular location">
    <subcellularLocation>
        <location evidence="1">Cytoplasm</location>
    </subcellularLocation>
</comment>
<comment type="similarity">
    <text evidence="1">Belongs to the RuvC family.</text>
</comment>